<name>RS18_AYWBP</name>
<evidence type="ECO:0000255" key="1">
    <source>
        <dbReference type="HAMAP-Rule" id="MF_00270"/>
    </source>
</evidence>
<evidence type="ECO:0000305" key="2"/>
<organism>
    <name type="scientific">Aster yellows witches'-broom phytoplasma (strain AYWB)</name>
    <dbReference type="NCBI Taxonomy" id="322098"/>
    <lineage>
        <taxon>Bacteria</taxon>
        <taxon>Bacillati</taxon>
        <taxon>Mycoplasmatota</taxon>
        <taxon>Mollicutes</taxon>
        <taxon>Acholeplasmatales</taxon>
        <taxon>Acholeplasmataceae</taxon>
        <taxon>Candidatus Phytoplasma</taxon>
        <taxon>16SrI (Aster yellows group)</taxon>
    </lineage>
</organism>
<protein>
    <recommendedName>
        <fullName evidence="1">Small ribosomal subunit protein bS18</fullName>
    </recommendedName>
    <alternativeName>
        <fullName evidence="2">30S ribosomal protein S18</fullName>
    </alternativeName>
</protein>
<reference key="1">
    <citation type="journal article" date="2006" name="J. Bacteriol.">
        <title>Living with genome instability: the adaptation of phytoplasmas to diverse environments of their insect and plant hosts.</title>
        <authorList>
            <person name="Bai X."/>
            <person name="Zhang J."/>
            <person name="Ewing A."/>
            <person name="Miller S.A."/>
            <person name="Jancso Radek A."/>
            <person name="Shevchenko D.V."/>
            <person name="Tsukerman K."/>
            <person name="Walunas T."/>
            <person name="Lapidus A."/>
            <person name="Campbell J.W."/>
            <person name="Hogenhout S.A."/>
        </authorList>
    </citation>
    <scope>NUCLEOTIDE SEQUENCE [LARGE SCALE GENOMIC DNA]</scope>
    <source>
        <strain>AYWB</strain>
    </source>
</reference>
<dbReference type="EMBL" id="CP000061">
    <property type="protein sequence ID" value="ABC65122.1"/>
    <property type="molecule type" value="Genomic_DNA"/>
</dbReference>
<dbReference type="RefSeq" id="WP_011412289.1">
    <property type="nucleotide sequence ID" value="NC_007716.1"/>
</dbReference>
<dbReference type="SMR" id="Q2NKC1"/>
<dbReference type="STRING" id="322098.AYWB_005"/>
<dbReference type="KEGG" id="ayw:AYWB_005"/>
<dbReference type="eggNOG" id="COG0238">
    <property type="taxonomic scope" value="Bacteria"/>
</dbReference>
<dbReference type="HOGENOM" id="CLU_148710_2_2_14"/>
<dbReference type="OrthoDB" id="9812008at2"/>
<dbReference type="PhylomeDB" id="Q2NKC1"/>
<dbReference type="Proteomes" id="UP000001934">
    <property type="component" value="Chromosome"/>
</dbReference>
<dbReference type="GO" id="GO:0022627">
    <property type="term" value="C:cytosolic small ribosomal subunit"/>
    <property type="evidence" value="ECO:0007669"/>
    <property type="project" value="TreeGrafter"/>
</dbReference>
<dbReference type="GO" id="GO:0070181">
    <property type="term" value="F:small ribosomal subunit rRNA binding"/>
    <property type="evidence" value="ECO:0007669"/>
    <property type="project" value="TreeGrafter"/>
</dbReference>
<dbReference type="GO" id="GO:0003735">
    <property type="term" value="F:structural constituent of ribosome"/>
    <property type="evidence" value="ECO:0007669"/>
    <property type="project" value="InterPro"/>
</dbReference>
<dbReference type="GO" id="GO:0006412">
    <property type="term" value="P:translation"/>
    <property type="evidence" value="ECO:0007669"/>
    <property type="project" value="UniProtKB-UniRule"/>
</dbReference>
<dbReference type="Gene3D" id="4.10.640.10">
    <property type="entry name" value="Ribosomal protein S18"/>
    <property type="match status" value="1"/>
</dbReference>
<dbReference type="HAMAP" id="MF_00270">
    <property type="entry name" value="Ribosomal_bS18"/>
    <property type="match status" value="1"/>
</dbReference>
<dbReference type="InterPro" id="IPR001648">
    <property type="entry name" value="Ribosomal_bS18"/>
</dbReference>
<dbReference type="InterPro" id="IPR018275">
    <property type="entry name" value="Ribosomal_bS18_CS"/>
</dbReference>
<dbReference type="InterPro" id="IPR036870">
    <property type="entry name" value="Ribosomal_bS18_sf"/>
</dbReference>
<dbReference type="NCBIfam" id="TIGR00165">
    <property type="entry name" value="S18"/>
    <property type="match status" value="1"/>
</dbReference>
<dbReference type="PANTHER" id="PTHR13479">
    <property type="entry name" value="30S RIBOSOMAL PROTEIN S18"/>
    <property type="match status" value="1"/>
</dbReference>
<dbReference type="PANTHER" id="PTHR13479:SF40">
    <property type="entry name" value="SMALL RIBOSOMAL SUBUNIT PROTEIN BS18M"/>
    <property type="match status" value="1"/>
</dbReference>
<dbReference type="Pfam" id="PF01084">
    <property type="entry name" value="Ribosomal_S18"/>
    <property type="match status" value="1"/>
</dbReference>
<dbReference type="PRINTS" id="PR00974">
    <property type="entry name" value="RIBOSOMALS18"/>
</dbReference>
<dbReference type="SUPFAM" id="SSF46911">
    <property type="entry name" value="Ribosomal protein S18"/>
    <property type="match status" value="1"/>
</dbReference>
<dbReference type="PROSITE" id="PS00057">
    <property type="entry name" value="RIBOSOMAL_S18"/>
    <property type="match status" value="1"/>
</dbReference>
<gene>
    <name evidence="1" type="primary">rpsR</name>
    <name type="ordered locus">AYWB_005</name>
</gene>
<sequence>MKFNNKKNTFKKRRKVCFFTENKVTKIDFKDIELLQRFITDRGRILSRRVTNTSARWQRQLAIAIKRARHMALIPFIQQ</sequence>
<accession>Q2NKC1</accession>
<comment type="function">
    <text evidence="1">Binds as a heterodimer with protein bS6 to the central domain of the 16S rRNA, where it helps stabilize the platform of the 30S subunit.</text>
</comment>
<comment type="subunit">
    <text evidence="1">Part of the 30S ribosomal subunit. Forms a tight heterodimer with protein bS6.</text>
</comment>
<comment type="similarity">
    <text evidence="1">Belongs to the bacterial ribosomal protein bS18 family.</text>
</comment>
<feature type="chain" id="PRO_1000003441" description="Small ribosomal subunit protein bS18">
    <location>
        <begin position="1"/>
        <end position="79"/>
    </location>
</feature>
<proteinExistence type="inferred from homology"/>
<keyword id="KW-0687">Ribonucleoprotein</keyword>
<keyword id="KW-0689">Ribosomal protein</keyword>
<keyword id="KW-0694">RNA-binding</keyword>
<keyword id="KW-0699">rRNA-binding</keyword>